<organism evidence="5">
    <name type="scientific">Toxodon sp</name>
    <dbReference type="NCBI Taxonomy" id="1563122"/>
    <lineage>
        <taxon>Eukaryota</taxon>
        <taxon>Metazoa</taxon>
        <taxon>Chordata</taxon>
        <taxon>Craniata</taxon>
        <taxon>Vertebrata</taxon>
        <taxon>Euteleostomi</taxon>
        <taxon>Mammalia</taxon>
        <taxon>Eutheria</taxon>
        <taxon>Notoungulata</taxon>
        <taxon>Toxodontidae</taxon>
        <taxon>Toxodon</taxon>
    </lineage>
</organism>
<proteinExistence type="evidence at protein level"/>
<reference evidence="6" key="1">
    <citation type="journal article" date="2015" name="Nature">
        <title>Ancient proteins resolve the evolutionary history of Darwin's South American ungulates.</title>
        <authorList>
            <person name="Welker F."/>
            <person name="Collins M.J."/>
            <person name="Thomas J.A."/>
            <person name="Wadsley M."/>
            <person name="Brace S."/>
            <person name="Cappellini E."/>
            <person name="Turvey S.T."/>
            <person name="Reguero M."/>
            <person name="Gelfo J.N."/>
            <person name="Kramarz A."/>
            <person name="Burger J."/>
            <person name="Thomas-Oates J."/>
            <person name="Ashford D.A."/>
            <person name="Ashton P.D."/>
            <person name="Rowsell K."/>
            <person name="Porter D.M."/>
            <person name="Kessler B."/>
            <person name="Fischer R."/>
            <person name="Baessmann C."/>
            <person name="Kaspar S."/>
            <person name="Olsen J.V."/>
            <person name="Kiley P."/>
            <person name="Elliott J.A."/>
            <person name="Kelstrup C.D."/>
            <person name="Mullin V."/>
            <person name="Hofreiter M."/>
            <person name="Willerslev E."/>
            <person name="Hublin J.J."/>
            <person name="Orlando L."/>
            <person name="Barnes I."/>
            <person name="MacPhee R.D."/>
        </authorList>
    </citation>
    <scope>PROTEIN SEQUENCE</scope>
    <scope>IDENTIFICATION BY MASS SPECTROMETRY</scope>
    <source>
        <tissue evidence="5">Bone</tissue>
    </source>
</reference>
<sequence>GPMGPSGPRGFQGPPGEPGEPGASGPMGPRGPPGPPGKNGDDGEAGKPGRPGERGPPGPQGARGIPGTAGIPGMKGHRGFSGIDGAKGDAGPAGPKGEPGSPGENGAPGQMGPRGIPGERGRPGPTGPAGARGNDGATGAAGPPGPTGPAGPPGFPGAVGAKGEAGPQGARGSEGPQGVRGEPGPPGPAGAAGPAGNPGADGQPGAKGANGAPGIAGAPGFPGARGPSGPQGPSGPPGPKGNSGEPGAPGSKGDAGAKGEPGPTGVQGPPGPAGEEGKRGAGEPGPTGIPGPPGERGGPGSRGFPGADGVAGPKGPAGERGAPGPAGPKGSPGEAGRPGEAGIPGAKGITGSPGSPGPDGKTGPPGPAGQDGRPGPPGPPGARGQAGVMGFPGPKGAAGEPGKAGERGVPGPPGAVGPAGKDGEAGAQGPPGSAGPAGERGEQGPAGSPGFQGIPGPAGPPGESGKPGEQGVPGDIGAPGPSGARGERGFPGERGVQGPPGPAGPRGAGDAGAPGAPGSQGAPGIQGMPGERGAAGIPGPKGDRGDAGPKGADGSPGKDGVRGITGPIGPPGPAGAPGDKGESGPSGPAGPTGARGAPGDRGEPGPPGPAGFAGPPGADGQPGAKGEPGDAGAKGDAGPAGPAGPTGPPGPIGNVGAPGPKGARGSAGPPGATGFPGAAGRVGPPGPAGNAGPPGPPGPVGKKGPRGETGPAGRPGEVGPPGPPGPAGEKGSPGSDGPAGAPGTPGPQGIAGQRGVVGIPGQRGERGFPGIPGPSGEPGKQGPSGASGERGPPGPIGPPGIAGPPGESGREGAPGAEGSPGRDGSPGPKGDRGEAGPAGPPGAPGAPGAPGPVGPAGKSGDRGETGPAGPAGPIGPTGARGPAGPQGPRGDKGETGEQGDRGFSGIQGPPGPPGSPGEQGPAGASGPAGPRGPPGSAGAPGKDGINGIPGPIGPPGPRGRTGPAGPRGPPGPPGAPGPPGPP</sequence>
<comment type="function">
    <text evidence="6">Type I collagen is a member of group I collagen (fibrillar forming collagen).</text>
</comment>
<comment type="subunit">
    <text evidence="6">Trimers of one alpha 2(I) and two alpha 1(I) chains.</text>
</comment>
<comment type="subcellular location">
    <subcellularLocation>
        <location>Secreted</location>
    </subcellularLocation>
    <subcellularLocation>
        <location>Secreted</location>
        <location>Extracellular space</location>
    </subcellularLocation>
    <subcellularLocation>
        <location evidence="6">Secreted</location>
        <location evidence="6">Extracellular space</location>
        <location evidence="6">Extracellular matrix</location>
    </subcellularLocation>
</comment>
<comment type="tissue specificity">
    <text evidence="6">Forms the fibrils of tendon, ligaments and bones. In bones, the fibrils are mineralized with calcium hydroxyapatite.</text>
</comment>
<comment type="PTM">
    <text evidence="6">Prolines at the third position of the tripeptide repeating unit (G-X-Y) are hydroxylated in some or all of the chains.</text>
</comment>
<comment type="miscellaneous">
    <text evidence="7">These protein fragments were extracted from fossils. The tryptic peptides required multiple purification steps in order to eliminate contaminants and to increase the concentration of peptidic material.</text>
</comment>
<comment type="similarity">
    <text evidence="6">Belongs to the fibrillar collagen family.</text>
</comment>
<gene>
    <name evidence="1" type="primary">COL1A1</name>
</gene>
<keyword id="KW-0106">Calcium</keyword>
<keyword id="KW-0176">Collagen</keyword>
<keyword id="KW-0903">Direct protein sequencing</keyword>
<keyword id="KW-0952">Extinct organism protein</keyword>
<keyword id="KW-0272">Extracellular matrix</keyword>
<keyword id="KW-0379">Hydroxylation</keyword>
<keyword id="KW-0597">Phosphoprotein</keyword>
<keyword id="KW-0677">Repeat</keyword>
<keyword id="KW-0964">Secreted</keyword>
<protein>
    <recommendedName>
        <fullName evidence="5">Collagen alpha-1(I) chain</fullName>
    </recommendedName>
    <alternativeName>
        <fullName evidence="1">Alpha-1 type I collagen</fullName>
    </alternativeName>
</protein>
<name>CO1A1_TOXSP</name>
<feature type="chain" id="PRO_0000433499" description="Collagen alpha-1(I) chain" evidence="4">
    <location>
        <begin position="1"/>
        <end position="982"/>
    </location>
</feature>
<feature type="region of interest" description="Disordered" evidence="3">
    <location>
        <begin position="1"/>
        <end position="982"/>
    </location>
</feature>
<feature type="compositionally biased region" description="Low complexity" evidence="3">
    <location>
        <begin position="8"/>
        <end position="27"/>
    </location>
</feature>
<feature type="compositionally biased region" description="Basic and acidic residues" evidence="3">
    <location>
        <begin position="39"/>
        <end position="53"/>
    </location>
</feature>
<feature type="compositionally biased region" description="Low complexity" evidence="3">
    <location>
        <begin position="89"/>
        <end position="105"/>
    </location>
</feature>
<feature type="compositionally biased region" description="Low complexity" evidence="3">
    <location>
        <begin position="128"/>
        <end position="141"/>
    </location>
</feature>
<feature type="compositionally biased region" description="Pro residues" evidence="3">
    <location>
        <begin position="143"/>
        <end position="155"/>
    </location>
</feature>
<feature type="compositionally biased region" description="Low complexity" evidence="3">
    <location>
        <begin position="189"/>
        <end position="228"/>
    </location>
</feature>
<feature type="compositionally biased region" description="Gly residues" evidence="3">
    <location>
        <begin position="294"/>
        <end position="303"/>
    </location>
</feature>
<feature type="compositionally biased region" description="Low complexity" evidence="3">
    <location>
        <begin position="304"/>
        <end position="335"/>
    </location>
</feature>
<feature type="compositionally biased region" description="Low complexity" evidence="3">
    <location>
        <begin position="347"/>
        <end position="373"/>
    </location>
</feature>
<feature type="compositionally biased region" description="Low complexity" evidence="3">
    <location>
        <begin position="382"/>
        <end position="401"/>
    </location>
</feature>
<feature type="compositionally biased region" description="Low complexity" evidence="3">
    <location>
        <begin position="425"/>
        <end position="437"/>
    </location>
</feature>
<feature type="compositionally biased region" description="Low complexity" evidence="3">
    <location>
        <begin position="513"/>
        <end position="526"/>
    </location>
</feature>
<feature type="compositionally biased region" description="Low complexity" evidence="3">
    <location>
        <begin position="583"/>
        <end position="597"/>
    </location>
</feature>
<feature type="compositionally biased region" description="Low complexity" evidence="3">
    <location>
        <begin position="610"/>
        <end position="640"/>
    </location>
</feature>
<feature type="compositionally biased region" description="Low complexity" evidence="3">
    <location>
        <begin position="666"/>
        <end position="682"/>
    </location>
</feature>
<feature type="compositionally biased region" description="Low complexity" evidence="3">
    <location>
        <begin position="727"/>
        <end position="751"/>
    </location>
</feature>
<feature type="compositionally biased region" description="Pro residues" evidence="3">
    <location>
        <begin position="792"/>
        <end position="802"/>
    </location>
</feature>
<feature type="compositionally biased region" description="Pro residues" evidence="3">
    <location>
        <begin position="838"/>
        <end position="853"/>
    </location>
</feature>
<feature type="compositionally biased region" description="Low complexity" evidence="3">
    <location>
        <begin position="874"/>
        <end position="888"/>
    </location>
</feature>
<feature type="compositionally biased region" description="Basic and acidic residues" evidence="3">
    <location>
        <begin position="889"/>
        <end position="900"/>
    </location>
</feature>
<feature type="compositionally biased region" description="Low complexity" evidence="3">
    <location>
        <begin position="916"/>
        <end position="940"/>
    </location>
</feature>
<feature type="compositionally biased region" description="Pro residues" evidence="3">
    <location>
        <begin position="966"/>
        <end position="982"/>
    </location>
</feature>
<feature type="modified residue" description="Phosphoserine" evidence="2">
    <location>
        <position position="81"/>
    </location>
</feature>
<feature type="modified residue" description="Phosphoserine" evidence="2">
    <location>
        <position position="586"/>
    </location>
</feature>
<feature type="unsure residue" description="I or L" evidence="4">
    <location>
        <position position="65"/>
    </location>
</feature>
<feature type="unsure residue" description="I or L" evidence="4">
    <location>
        <position position="71"/>
    </location>
</feature>
<feature type="unsure residue" description="I or L" evidence="4">
    <location>
        <position position="83"/>
    </location>
</feature>
<feature type="unsure residue" description="I or L" evidence="4">
    <location>
        <position position="116"/>
    </location>
</feature>
<feature type="unsure residue" description="I or L" evidence="4">
    <location>
        <position position="215"/>
    </location>
</feature>
<feature type="unsure residue" description="I or L" evidence="4">
    <location>
        <position position="289"/>
    </location>
</feature>
<feature type="unsure residue" description="I or L" evidence="4">
    <location>
        <position position="343"/>
    </location>
</feature>
<feature type="unsure residue" description="I or L" evidence="4">
    <location>
        <position position="349"/>
    </location>
</feature>
<feature type="unsure residue" description="I or L" evidence="4">
    <location>
        <position position="454"/>
    </location>
</feature>
<feature type="unsure residue" description="I or L" evidence="4">
    <location>
        <position position="476"/>
    </location>
</feature>
<feature type="unsure residue" description="I or L" evidence="4">
    <location>
        <position position="525"/>
    </location>
</feature>
<feature type="unsure residue" description="I or L" evidence="4">
    <location>
        <position position="537"/>
    </location>
</feature>
<feature type="unsure residue" description="I or L" evidence="4">
    <location>
        <position position="564"/>
    </location>
</feature>
<feature type="unsure residue" description="I or L" evidence="4">
    <location>
        <position position="568"/>
    </location>
</feature>
<feature type="unsure residue" description="I or L" evidence="4">
    <location>
        <position position="652"/>
    </location>
</feature>
<feature type="unsure residue" description="I or L" evidence="4">
    <location>
        <position position="750"/>
    </location>
</feature>
<feature type="unsure residue" description="I or L" evidence="4">
    <location>
        <position position="759"/>
    </location>
</feature>
<feature type="unsure residue" description="I or L" evidence="4">
    <location>
        <position position="771"/>
    </location>
</feature>
<feature type="unsure residue" description="I or L" evidence="4">
    <location>
        <position position="796"/>
    </location>
</feature>
<feature type="unsure residue" description="I or L" evidence="4">
    <location>
        <position position="801"/>
    </location>
</feature>
<feature type="unsure residue" description="I or L" evidence="4">
    <location>
        <position position="874"/>
    </location>
</feature>
<feature type="unsure residue" description="I or L" evidence="4">
    <location>
        <position position="906"/>
    </location>
</feature>
<feature type="unsure residue" description="I or L" evidence="4">
    <location>
        <position position="945"/>
    </location>
</feature>
<feature type="unsure residue" description="I or L" evidence="4">
    <location>
        <position position="948"/>
    </location>
</feature>
<feature type="unsure residue" description="I or L" evidence="4">
    <location>
        <position position="952"/>
    </location>
</feature>
<feature type="non-consecutive residues" evidence="5">
    <location>
        <begin position="9"/>
        <end position="10"/>
    </location>
</feature>
<feature type="non-consecutive residues" evidence="5">
    <location>
        <begin position="281"/>
        <end position="282"/>
    </location>
</feature>
<feature type="non-consecutive residues" evidence="5">
    <location>
        <begin position="508"/>
        <end position="509"/>
    </location>
</feature>
<feature type="non-consecutive residues" evidence="5">
    <location>
        <begin position="702"/>
        <end position="703"/>
    </location>
</feature>
<feature type="non-consecutive residues" evidence="5">
    <location>
        <begin position="901"/>
        <end position="902"/>
    </location>
</feature>
<evidence type="ECO:0000250" key="1">
    <source>
        <dbReference type="UniProtKB" id="P02452"/>
    </source>
</evidence>
<evidence type="ECO:0000250" key="2">
    <source>
        <dbReference type="UniProtKB" id="P02454"/>
    </source>
</evidence>
<evidence type="ECO:0000256" key="3">
    <source>
        <dbReference type="SAM" id="MobiDB-lite"/>
    </source>
</evidence>
<evidence type="ECO:0000269" key="4">
    <source>
    </source>
</evidence>
<evidence type="ECO:0000303" key="5">
    <source>
    </source>
</evidence>
<evidence type="ECO:0000305" key="6"/>
<evidence type="ECO:0000305" key="7">
    <source>
    </source>
</evidence>
<dbReference type="GO" id="GO:0005584">
    <property type="term" value="C:collagen type I trimer"/>
    <property type="evidence" value="ECO:0007669"/>
    <property type="project" value="TreeGrafter"/>
</dbReference>
<dbReference type="GO" id="GO:0005615">
    <property type="term" value="C:extracellular space"/>
    <property type="evidence" value="ECO:0007669"/>
    <property type="project" value="TreeGrafter"/>
</dbReference>
<dbReference type="GO" id="GO:0030020">
    <property type="term" value="F:extracellular matrix structural constituent conferring tensile strength"/>
    <property type="evidence" value="ECO:0007669"/>
    <property type="project" value="TreeGrafter"/>
</dbReference>
<dbReference type="GO" id="GO:0030198">
    <property type="term" value="P:extracellular matrix organization"/>
    <property type="evidence" value="ECO:0007669"/>
    <property type="project" value="TreeGrafter"/>
</dbReference>
<dbReference type="InterPro" id="IPR008160">
    <property type="entry name" value="Collagen"/>
</dbReference>
<dbReference type="InterPro" id="IPR050149">
    <property type="entry name" value="Collagen_superfamily"/>
</dbReference>
<dbReference type="PANTHER" id="PTHR24023">
    <property type="entry name" value="COLLAGEN ALPHA"/>
    <property type="match status" value="1"/>
</dbReference>
<dbReference type="PANTHER" id="PTHR24023:SF568">
    <property type="entry name" value="COLLAGEN ALPHA-2(I) CHAIN"/>
    <property type="match status" value="1"/>
</dbReference>
<dbReference type="Pfam" id="PF01391">
    <property type="entry name" value="Collagen"/>
    <property type="match status" value="11"/>
</dbReference>
<accession>C0HJP7</accession>